<accession>Q0CFJ0</accession>
<comment type="function">
    <text evidence="1">Secreted metalloproteinase that allows assimilation of proteinaceous substrates.</text>
</comment>
<comment type="cofactor">
    <cofactor evidence="1">
        <name>Zn(2+)</name>
        <dbReference type="ChEBI" id="CHEBI:29105"/>
    </cofactor>
    <text evidence="1">Binds 1 zinc ion per subunit.</text>
</comment>
<comment type="subcellular location">
    <subcellularLocation>
        <location evidence="1">Secreted</location>
    </subcellularLocation>
</comment>
<comment type="induction">
    <text>Expression is controlled by the prtT transcription factor.</text>
</comment>
<comment type="similarity">
    <text evidence="4">Belongs to the peptidase M36 family.</text>
</comment>
<keyword id="KW-0325">Glycoprotein</keyword>
<keyword id="KW-0378">Hydrolase</keyword>
<keyword id="KW-0479">Metal-binding</keyword>
<keyword id="KW-0482">Metalloprotease</keyword>
<keyword id="KW-0645">Protease</keyword>
<keyword id="KW-1185">Reference proteome</keyword>
<keyword id="KW-0964">Secreted</keyword>
<keyword id="KW-0732">Signal</keyword>
<keyword id="KW-0862">Zinc</keyword>
<keyword id="KW-0865">Zymogen</keyword>
<protein>
    <recommendedName>
        <fullName>Extracellular metalloproteinase mep</fullName>
        <ecNumber>3.4.24.-</ecNumber>
    </recommendedName>
    <alternativeName>
        <fullName>Elastinolytic metalloproteinase mep</fullName>
    </alternativeName>
    <alternativeName>
        <fullName>Fungalysin mep</fullName>
    </alternativeName>
</protein>
<feature type="signal peptide" evidence="2">
    <location>
        <begin position="1"/>
        <end position="18"/>
    </location>
</feature>
<feature type="propeptide" id="PRO_0000407179" evidence="1">
    <location>
        <begin position="19"/>
        <end position="244"/>
    </location>
</feature>
<feature type="chain" id="PRO_0000407180" description="Extracellular metalloproteinase mep">
    <location>
        <begin position="245"/>
        <end position="633"/>
    </location>
</feature>
<feature type="active site" evidence="3">
    <location>
        <position position="429"/>
    </location>
</feature>
<feature type="binding site" evidence="3">
    <location>
        <position position="428"/>
    </location>
    <ligand>
        <name>Zn(2+)</name>
        <dbReference type="ChEBI" id="CHEBI:29105"/>
        <note>catalytic</note>
    </ligand>
</feature>
<feature type="binding site" evidence="3">
    <location>
        <position position="432"/>
    </location>
    <ligand>
        <name>Zn(2+)</name>
        <dbReference type="ChEBI" id="CHEBI:29105"/>
        <note>catalytic</note>
    </ligand>
</feature>
<feature type="glycosylation site" description="N-linked (GlcNAc...) asparagine" evidence="2">
    <location>
        <position position="326"/>
    </location>
</feature>
<feature type="glycosylation site" description="N-linked (GlcNAc...) asparagine" evidence="2">
    <location>
        <position position="514"/>
    </location>
</feature>
<gene>
    <name type="primary">mep</name>
    <name type="ORF">ATEG_07544</name>
</gene>
<sequence>MRLLSLAGAMALPLCVLAHPTHRTRGIARRGIDLTPYRLPGNAEYTSSRTSAMRSLLFERADGEDYVETAKKVLQSVHPDATFRVIDDHYVGDNGVAHVHLLQTAHGIDIDNANFNVNIDKNGKVLSYGNSFFSGKIPDSDPLTKRSFSDPVEALKAAATGLGIPLTADDVTSEGLDGTTSYTFKGTKGALSDPTADLVYLAKPDNTLALTWRVETDMNSNWLLTYVDAETAETIHGVVDYISDATYQVYPWGLNDPTEGSRQILEDPWDSKASEFTWIGDGKAKYKTTRGNNGIAQSNPDGGDDYLNNHRPESSSLKFVYPYSPNATSPSSYIDASITQLFYTANTYHDLLYTLGFNEKAGNFEANNNGAGGKGNDFVILNAQDGSGTNNAMFGSPPDGRPGRMYMFIWTESNPPRDGSMEAGIVIHEYTHGLSSRLTGGPANARCVDGEESGGMGEGWGDFMATAVRLKSGDTRQTDYTMGAWAANDPKGIRDYPYSTSMTKNPLTYAHLNNVTEVHEGGTIWASMLYEVMWNLIDKHGKNDAPKPDLKDGVPTDGKYLSMKLVMDGMALQPCNPSFIQARDAILDADVALTKSGNQCEIWKGFAKRGLGERAALKNGIRVDSFDVPKGVC</sequence>
<reference key="1">
    <citation type="submission" date="2005-09" db="EMBL/GenBank/DDBJ databases">
        <title>Annotation of the Aspergillus terreus NIH2624 genome.</title>
        <authorList>
            <person name="Birren B.W."/>
            <person name="Lander E.S."/>
            <person name="Galagan J.E."/>
            <person name="Nusbaum C."/>
            <person name="Devon K."/>
            <person name="Henn M."/>
            <person name="Ma L.-J."/>
            <person name="Jaffe D.B."/>
            <person name="Butler J."/>
            <person name="Alvarez P."/>
            <person name="Gnerre S."/>
            <person name="Grabherr M."/>
            <person name="Kleber M."/>
            <person name="Mauceli E.W."/>
            <person name="Brockman W."/>
            <person name="Rounsley S."/>
            <person name="Young S.K."/>
            <person name="LaButti K."/>
            <person name="Pushparaj V."/>
            <person name="DeCaprio D."/>
            <person name="Crawford M."/>
            <person name="Koehrsen M."/>
            <person name="Engels R."/>
            <person name="Montgomery P."/>
            <person name="Pearson M."/>
            <person name="Howarth C."/>
            <person name="Larson L."/>
            <person name="Luoma S."/>
            <person name="White J."/>
            <person name="Alvarado L."/>
            <person name="Kodira C.D."/>
            <person name="Zeng Q."/>
            <person name="Oleary S."/>
            <person name="Yandava C."/>
            <person name="Denning D.W."/>
            <person name="Nierman W.C."/>
            <person name="Milne T."/>
            <person name="Madden K."/>
        </authorList>
    </citation>
    <scope>NUCLEOTIDE SEQUENCE [LARGE SCALE GENOMIC DNA]</scope>
    <source>
        <strain>NIH 2624 / FGSC A1156</strain>
    </source>
</reference>
<organism>
    <name type="scientific">Aspergillus terreus (strain NIH 2624 / FGSC A1156)</name>
    <dbReference type="NCBI Taxonomy" id="341663"/>
    <lineage>
        <taxon>Eukaryota</taxon>
        <taxon>Fungi</taxon>
        <taxon>Dikarya</taxon>
        <taxon>Ascomycota</taxon>
        <taxon>Pezizomycotina</taxon>
        <taxon>Eurotiomycetes</taxon>
        <taxon>Eurotiomycetidae</taxon>
        <taxon>Eurotiales</taxon>
        <taxon>Aspergillaceae</taxon>
        <taxon>Aspergillus</taxon>
        <taxon>Aspergillus subgen. Circumdati</taxon>
    </lineage>
</organism>
<dbReference type="EC" id="3.4.24.-"/>
<dbReference type="EMBL" id="CH476604">
    <property type="protein sequence ID" value="EAU31806.1"/>
    <property type="molecule type" value="Genomic_DNA"/>
</dbReference>
<dbReference type="RefSeq" id="XP_001216165.1">
    <property type="nucleotide sequence ID" value="XM_001216165.1"/>
</dbReference>
<dbReference type="SMR" id="Q0CFJ0"/>
<dbReference type="STRING" id="341663.Q0CFJ0"/>
<dbReference type="MEROPS" id="M36.001"/>
<dbReference type="GlyCosmos" id="Q0CFJ0">
    <property type="glycosylation" value="2 sites, No reported glycans"/>
</dbReference>
<dbReference type="EnsemblFungi" id="EAU31806">
    <property type="protein sequence ID" value="EAU31806"/>
    <property type="gene ID" value="ATEG_07544"/>
</dbReference>
<dbReference type="GeneID" id="4322867"/>
<dbReference type="VEuPathDB" id="FungiDB:ATEG_07544"/>
<dbReference type="eggNOG" id="ENOG502QTDC">
    <property type="taxonomic scope" value="Eukaryota"/>
</dbReference>
<dbReference type="HOGENOM" id="CLU_012703_3_0_1"/>
<dbReference type="OMA" id="IRKDSYT"/>
<dbReference type="OrthoDB" id="3227768at2759"/>
<dbReference type="Proteomes" id="UP000007963">
    <property type="component" value="Unassembled WGS sequence"/>
</dbReference>
<dbReference type="GO" id="GO:0005576">
    <property type="term" value="C:extracellular region"/>
    <property type="evidence" value="ECO:0007669"/>
    <property type="project" value="UniProtKB-SubCell"/>
</dbReference>
<dbReference type="GO" id="GO:0004222">
    <property type="term" value="F:metalloendopeptidase activity"/>
    <property type="evidence" value="ECO:0007669"/>
    <property type="project" value="InterPro"/>
</dbReference>
<dbReference type="GO" id="GO:0008270">
    <property type="term" value="F:zinc ion binding"/>
    <property type="evidence" value="ECO:0007669"/>
    <property type="project" value="InterPro"/>
</dbReference>
<dbReference type="GO" id="GO:0006508">
    <property type="term" value="P:proteolysis"/>
    <property type="evidence" value="ECO:0007669"/>
    <property type="project" value="UniProtKB-KW"/>
</dbReference>
<dbReference type="CDD" id="cd09596">
    <property type="entry name" value="M36"/>
    <property type="match status" value="1"/>
</dbReference>
<dbReference type="Gene3D" id="3.10.170.10">
    <property type="match status" value="1"/>
</dbReference>
<dbReference type="Gene3D" id="1.10.390.10">
    <property type="entry name" value="Neutral Protease Domain 2"/>
    <property type="match status" value="1"/>
</dbReference>
<dbReference type="InterPro" id="IPR011096">
    <property type="entry name" value="FTP_domain"/>
</dbReference>
<dbReference type="InterPro" id="IPR050371">
    <property type="entry name" value="Fungal_virulence_M36"/>
</dbReference>
<dbReference type="InterPro" id="IPR001842">
    <property type="entry name" value="Peptidase_M36"/>
</dbReference>
<dbReference type="InterPro" id="IPR027268">
    <property type="entry name" value="Peptidase_M4/M1_CTD_sf"/>
</dbReference>
<dbReference type="PANTHER" id="PTHR33478">
    <property type="entry name" value="EXTRACELLULAR METALLOPROTEINASE MEP"/>
    <property type="match status" value="1"/>
</dbReference>
<dbReference type="PANTHER" id="PTHR33478:SF1">
    <property type="entry name" value="EXTRACELLULAR METALLOPROTEINASE MEP"/>
    <property type="match status" value="1"/>
</dbReference>
<dbReference type="Pfam" id="PF07504">
    <property type="entry name" value="FTP"/>
    <property type="match status" value="1"/>
</dbReference>
<dbReference type="Pfam" id="PF02128">
    <property type="entry name" value="Peptidase_M36"/>
    <property type="match status" value="1"/>
</dbReference>
<dbReference type="PRINTS" id="PR00999">
    <property type="entry name" value="FUNGALYSIN"/>
</dbReference>
<dbReference type="SUPFAM" id="SSF55486">
    <property type="entry name" value="Metalloproteases ('zincins'), catalytic domain"/>
    <property type="match status" value="1"/>
</dbReference>
<dbReference type="PROSITE" id="PS00142">
    <property type="entry name" value="ZINC_PROTEASE"/>
    <property type="match status" value="1"/>
</dbReference>
<proteinExistence type="evidence at transcript level"/>
<name>MEP_ASPTN</name>
<evidence type="ECO:0000250" key="1"/>
<evidence type="ECO:0000255" key="2"/>
<evidence type="ECO:0000255" key="3">
    <source>
        <dbReference type="PROSITE-ProRule" id="PRU10095"/>
    </source>
</evidence>
<evidence type="ECO:0000305" key="4"/>